<name>GMDS_HUMAN</name>
<accession>O60547</accession>
<accession>E9PI88</accession>
<accession>O75357</accession>
<accession>Q5T954</accession>
<accession>Q6FH09</accession>
<accession>Q9UGZ3</accession>
<accession>Q9UJK9</accession>
<gene>
    <name evidence="9" type="primary">GMDS</name>
</gene>
<feature type="initiator methionine" description="Removed" evidence="10">
    <location>
        <position position="1"/>
    </location>
</feature>
<feature type="chain" id="PRO_0000201705" description="GDP-mannose 4,6 dehydratase">
    <location>
        <begin position="2"/>
        <end position="372"/>
    </location>
</feature>
<feature type="region of interest" description="Disordered" evidence="2">
    <location>
        <begin position="1"/>
        <end position="20"/>
    </location>
</feature>
<feature type="active site" evidence="1">
    <location>
        <position position="155"/>
    </location>
</feature>
<feature type="active site" description="Nucleophile" evidence="1">
    <location>
        <position position="157"/>
    </location>
</feature>
<feature type="active site" description="Nucleophile" evidence="1">
    <location>
        <position position="179"/>
    </location>
</feature>
<feature type="binding site" evidence="5">
    <location>
        <begin position="30"/>
        <end position="35"/>
    </location>
    <ligand>
        <name>NADP(+)</name>
        <dbReference type="ChEBI" id="CHEBI:58349"/>
    </ligand>
</feature>
<feature type="binding site" evidence="5">
    <location>
        <begin position="55"/>
        <end position="58"/>
    </location>
    <ligand>
        <name>NADP(+)</name>
        <dbReference type="ChEBI" id="CHEBI:58349"/>
    </ligand>
</feature>
<feature type="binding site" evidence="5">
    <location>
        <begin position="86"/>
        <end position="87"/>
    </location>
    <ligand>
        <name>NADP(+)</name>
        <dbReference type="ChEBI" id="CHEBI:58349"/>
    </ligand>
</feature>
<feature type="binding site" evidence="5">
    <location>
        <begin position="108"/>
        <end position="112"/>
    </location>
    <ligand>
        <name>NADP(+)</name>
        <dbReference type="ChEBI" id="CHEBI:58349"/>
    </ligand>
</feature>
<feature type="binding site" evidence="5">
    <location>
        <position position="123"/>
    </location>
    <ligand>
        <name>NADP(+)</name>
        <dbReference type="ChEBI" id="CHEBI:58349"/>
    </ligand>
</feature>
<feature type="binding site" evidence="5">
    <location>
        <position position="183"/>
    </location>
    <ligand>
        <name>NADP(+)</name>
        <dbReference type="ChEBI" id="CHEBI:58349"/>
    </ligand>
</feature>
<feature type="binding site" evidence="5">
    <location>
        <position position="209"/>
    </location>
    <ligand>
        <name>NADP(+)</name>
        <dbReference type="ChEBI" id="CHEBI:58349"/>
    </ligand>
</feature>
<feature type="binding site" evidence="5">
    <location>
        <position position="214"/>
    </location>
    <ligand>
        <name>NADP(+)</name>
        <dbReference type="ChEBI" id="CHEBI:58349"/>
    </ligand>
</feature>
<feature type="modified residue" description="N-acetylalanine" evidence="10">
    <location>
        <position position="2"/>
    </location>
</feature>
<feature type="modified residue" description="Phosphotyrosine" evidence="11">
    <location>
        <position position="323"/>
    </location>
</feature>
<feature type="splice variant" id="VSP_047324" description="In isoform 2." evidence="6">
    <original>MAHAPARCPSARGSGDGEMGKPRNVALITGITGQ</original>
    <variation>MCKM</variation>
    <location>
        <begin position="1"/>
        <end position="34"/>
    </location>
</feature>
<feature type="sequence conflict" description="In Ref. 3; CAG46745." evidence="7" ref="3">
    <original>S</original>
    <variation>N</variation>
    <location>
        <position position="156"/>
    </location>
</feature>
<feature type="strand" evidence="13">
    <location>
        <begin position="25"/>
        <end position="29"/>
    </location>
</feature>
<feature type="turn" evidence="13">
    <location>
        <begin position="30"/>
        <end position="32"/>
    </location>
</feature>
<feature type="helix" evidence="13">
    <location>
        <begin position="34"/>
        <end position="45"/>
    </location>
</feature>
<feature type="strand" evidence="13">
    <location>
        <begin position="49"/>
        <end position="54"/>
    </location>
</feature>
<feature type="turn" evidence="13">
    <location>
        <begin position="63"/>
        <end position="65"/>
    </location>
</feature>
<feature type="helix" evidence="13">
    <location>
        <begin position="66"/>
        <end position="68"/>
    </location>
</feature>
<feature type="strand" evidence="13">
    <location>
        <begin position="69"/>
        <end position="71"/>
    </location>
</feature>
<feature type="turn" evidence="13">
    <location>
        <begin position="72"/>
        <end position="75"/>
    </location>
</feature>
<feature type="strand" evidence="13">
    <location>
        <begin position="78"/>
        <end position="84"/>
    </location>
</feature>
<feature type="helix" evidence="13">
    <location>
        <begin position="90"/>
        <end position="100"/>
    </location>
</feature>
<feature type="strand" evidence="13">
    <location>
        <begin position="103"/>
        <end position="107"/>
    </location>
</feature>
<feature type="helix" evidence="13">
    <location>
        <begin position="114"/>
        <end position="117"/>
    </location>
</feature>
<feature type="helix" evidence="13">
    <location>
        <begin position="121"/>
        <end position="128"/>
    </location>
</feature>
<feature type="helix" evidence="13">
    <location>
        <begin position="130"/>
        <end position="141"/>
    </location>
</feature>
<feature type="turn" evidence="13">
    <location>
        <begin position="145"/>
        <end position="147"/>
    </location>
</feature>
<feature type="strand" evidence="13">
    <location>
        <begin position="149"/>
        <end position="155"/>
    </location>
</feature>
<feature type="helix" evidence="13">
    <location>
        <begin position="156"/>
        <end position="159"/>
    </location>
</feature>
<feature type="strand" evidence="13">
    <location>
        <begin position="163"/>
        <end position="167"/>
    </location>
</feature>
<feature type="helix" evidence="13">
    <location>
        <begin position="178"/>
        <end position="197"/>
    </location>
</feature>
<feature type="strand" evidence="13">
    <location>
        <begin position="200"/>
        <end position="206"/>
    </location>
</feature>
<feature type="helix" evidence="13">
    <location>
        <begin position="219"/>
        <end position="231"/>
    </location>
</feature>
<feature type="strand" evidence="13">
    <location>
        <begin position="238"/>
        <end position="241"/>
    </location>
</feature>
<feature type="strand" evidence="12">
    <location>
        <begin position="246"/>
        <end position="248"/>
    </location>
</feature>
<feature type="helix" evidence="13">
    <location>
        <begin position="252"/>
        <end position="264"/>
    </location>
</feature>
<feature type="strand" evidence="13">
    <location>
        <begin position="265"/>
        <end position="267"/>
    </location>
</feature>
<feature type="strand" evidence="13">
    <location>
        <begin position="271"/>
        <end position="273"/>
    </location>
</feature>
<feature type="strand" evidence="12">
    <location>
        <begin position="278"/>
        <end position="280"/>
    </location>
</feature>
<feature type="helix" evidence="13">
    <location>
        <begin position="281"/>
        <end position="290"/>
    </location>
</feature>
<feature type="turn" evidence="13">
    <location>
        <begin position="291"/>
        <end position="293"/>
    </location>
</feature>
<feature type="strand" evidence="13">
    <location>
        <begin position="296"/>
        <end position="300"/>
    </location>
</feature>
<feature type="helix" evidence="13">
    <location>
        <begin position="302"/>
        <end position="304"/>
    </location>
</feature>
<feature type="strand" evidence="13">
    <location>
        <begin position="306"/>
        <end position="309"/>
    </location>
</feature>
<feature type="turn" evidence="13">
    <location>
        <begin position="310"/>
        <end position="312"/>
    </location>
</feature>
<feature type="strand" evidence="13">
    <location>
        <begin position="315"/>
        <end position="319"/>
    </location>
</feature>
<feature type="helix" evidence="13">
    <location>
        <begin position="321"/>
        <end position="323"/>
    </location>
</feature>
<feature type="helix" evidence="13">
    <location>
        <begin position="337"/>
        <end position="343"/>
    </location>
</feature>
<feature type="helix" evidence="13">
    <location>
        <begin position="351"/>
        <end position="368"/>
    </location>
</feature>
<sequence length="372" mass="41950">MAHAPARCPSARGSGDGEMGKPRNVALITGITGQDGSYLAEFLLEKGYEVHGIVRRSSSFNTGRIEHLYKNPQAHIEGNMKLHYGDLTDSTCLVKIINEVKPTEIYNLGAQSHVKISFDLAEYTADVDGVGTLRLLDAVKTCGLINSVKFYQASTSELYGKVQEIPQKETTPFYPRSPYGAAKLYAYWIVVNFREAYNLFAVNGILFNHESPRRGANFVTRKISRSVAKIYLGQLECFSLGNLDAKRDWGHAKDYVEAMWLMLQNDEPEDFVIATGEVHSVREFVEKSFLHIGKTIVWEGKNENEVGRCKETGKVHVTVDLKYYRPTEVDFLQGDCTKAKQKLNWKPRVAFDELVREMVHADVELMRTNPNA</sequence>
<keyword id="KW-0002">3D-structure</keyword>
<keyword id="KW-0007">Acetylation</keyword>
<keyword id="KW-0025">Alternative splicing</keyword>
<keyword id="KW-0456">Lyase</keyword>
<keyword id="KW-0521">NADP</keyword>
<keyword id="KW-0597">Phosphoprotein</keyword>
<keyword id="KW-1267">Proteomics identification</keyword>
<keyword id="KW-1185">Reference proteome</keyword>
<comment type="function">
    <text evidence="3 4">Catalyzes the conversion of GDP-D-mannose to GDP-4-dehydro-6-deoxy-D-mannose.</text>
</comment>
<comment type="catalytic activity">
    <reaction evidence="3">
        <text>GDP-alpha-D-mannose = GDP-4-dehydro-alpha-D-rhamnose + H2O</text>
        <dbReference type="Rhea" id="RHEA:23820"/>
        <dbReference type="ChEBI" id="CHEBI:15377"/>
        <dbReference type="ChEBI" id="CHEBI:57527"/>
        <dbReference type="ChEBI" id="CHEBI:57964"/>
        <dbReference type="EC" id="4.2.1.47"/>
    </reaction>
    <physiologicalReaction direction="left-to-right" evidence="8">
        <dbReference type="Rhea" id="RHEA:23821"/>
    </physiologicalReaction>
</comment>
<comment type="cofactor">
    <cofactor evidence="5">
        <name>NADP(+)</name>
        <dbReference type="ChEBI" id="CHEBI:58349"/>
    </cofactor>
</comment>
<comment type="activity regulation">
    <text evidence="3">Inhibited by GDP-fucose.</text>
</comment>
<comment type="biophysicochemical properties">
    <kinetics>
        <KM evidence="3">80 uM for GDP-mannose</KM>
        <Vmax evidence="3">0.11 umol/min/mg enzyme</Vmax>
    </kinetics>
</comment>
<comment type="pathway">
    <text evidence="8">Nucleotide-sugar biosynthesis; GDP-L-fucose biosynthesis via de novo pathway; GDP-L-fucose from GDP-alpha-D-mannose: step 1/2.</text>
</comment>
<comment type="interaction">
    <interactant intactId="EBI-746373">
        <id>O60547</id>
    </interactant>
    <interactant intactId="EBI-746373">
        <id>O60547</id>
        <label>GMDS</label>
    </interactant>
    <organismsDiffer>false</organismsDiffer>
    <experiments>6</experiments>
</comment>
<comment type="interaction">
    <interactant intactId="EBI-746373">
        <id>O60547</id>
    </interactant>
    <interactant intactId="EBI-12050557">
        <id>O43448</id>
        <label>KCNAB3</label>
    </interactant>
    <organismsDiffer>false</organismsDiffer>
    <experiments>3</experiments>
</comment>
<comment type="interaction">
    <interactant intactId="EBI-746373">
        <id>O60547</id>
    </interactant>
    <interactant intactId="EBI-741158">
        <id>Q96HA8</id>
        <label>NTAQ1</label>
    </interactant>
    <organismsDiffer>false</organismsDiffer>
    <experiments>6</experiments>
</comment>
<comment type="alternative products">
    <event type="alternative splicing"/>
    <isoform>
        <id>O60547-1</id>
        <name>1</name>
        <sequence type="displayed"/>
    </isoform>
    <isoform>
        <id>O60547-2</id>
        <name>2</name>
        <sequence type="described" ref="VSP_047324"/>
    </isoform>
</comment>
<comment type="tissue specificity">
    <text evidence="3">Highly expressed in pancreas and small intestine. Expressed in thymus, protstate, colon, heart, placenta, liver and kidney. Expressed at low levels in spleen, testis, brain and lung.</text>
</comment>
<comment type="similarity">
    <text evidence="7">Belongs to the NAD(P)-dependent epimerase/dehydratase family. GDP-mannose 4,6-dehydratase subfamily.</text>
</comment>
<comment type="sequence caution" evidence="7">
    <conflict type="erroneous initiation">
        <sequence resource="EMBL-CDS" id="AAC24501"/>
    </conflict>
    <text>Truncated N-terminus.</text>
</comment>
<evidence type="ECO:0000250" key="1"/>
<evidence type="ECO:0000256" key="2">
    <source>
        <dbReference type="SAM" id="MobiDB-lite"/>
    </source>
</evidence>
<evidence type="ECO:0000269" key="3">
    <source>
    </source>
</evidence>
<evidence type="ECO:0000269" key="4">
    <source>
    </source>
</evidence>
<evidence type="ECO:0000269" key="5">
    <source ref="9"/>
</evidence>
<evidence type="ECO:0000303" key="6">
    <source>
    </source>
</evidence>
<evidence type="ECO:0000305" key="7"/>
<evidence type="ECO:0000305" key="8">
    <source>
    </source>
</evidence>
<evidence type="ECO:0000312" key="9">
    <source>
        <dbReference type="HGNC" id="HGNC:4369"/>
    </source>
</evidence>
<evidence type="ECO:0007744" key="10">
    <source>
    </source>
</evidence>
<evidence type="ECO:0007744" key="11">
    <source>
    </source>
</evidence>
<evidence type="ECO:0007829" key="12">
    <source>
        <dbReference type="PDB" id="5IN4"/>
    </source>
</evidence>
<evidence type="ECO:0007829" key="13">
    <source>
        <dbReference type="PDB" id="6GPK"/>
    </source>
</evidence>
<organism>
    <name type="scientific">Homo sapiens</name>
    <name type="common">Human</name>
    <dbReference type="NCBI Taxonomy" id="9606"/>
    <lineage>
        <taxon>Eukaryota</taxon>
        <taxon>Metazoa</taxon>
        <taxon>Chordata</taxon>
        <taxon>Craniata</taxon>
        <taxon>Vertebrata</taxon>
        <taxon>Euteleostomi</taxon>
        <taxon>Mammalia</taxon>
        <taxon>Eutheria</taxon>
        <taxon>Euarchontoglires</taxon>
        <taxon>Primates</taxon>
        <taxon>Haplorrhini</taxon>
        <taxon>Catarrhini</taxon>
        <taxon>Hominidae</taxon>
        <taxon>Homo</taxon>
    </lineage>
</organism>
<proteinExistence type="evidence at protein level"/>
<protein>
    <recommendedName>
        <fullName evidence="7">GDP-mannose 4,6 dehydratase</fullName>
        <ecNumber evidence="3">4.2.1.47</ecNumber>
    </recommendedName>
    <alternativeName>
        <fullName>GDP-D-mannose dehydratase</fullName>
        <shortName>GMD</shortName>
    </alternativeName>
</protein>
<dbReference type="EC" id="4.2.1.47" evidence="3"/>
<dbReference type="EMBL" id="AF042377">
    <property type="protein sequence ID" value="AAC13553.1"/>
    <property type="molecule type" value="mRNA"/>
</dbReference>
<dbReference type="EMBL" id="AF040260">
    <property type="protein sequence ID" value="AAC24501.1"/>
    <property type="status" value="ALT_INIT"/>
    <property type="molecule type" value="mRNA"/>
</dbReference>
<dbReference type="EMBL" id="CR541929">
    <property type="protein sequence ID" value="CAG46727.1"/>
    <property type="molecule type" value="mRNA"/>
</dbReference>
<dbReference type="EMBL" id="CR541947">
    <property type="protein sequence ID" value="CAG46745.1"/>
    <property type="molecule type" value="mRNA"/>
</dbReference>
<dbReference type="EMBL" id="AL033517">
    <property type="status" value="NOT_ANNOTATED_CDS"/>
    <property type="molecule type" value="Genomic_DNA"/>
</dbReference>
<dbReference type="EMBL" id="AL034344">
    <property type="status" value="NOT_ANNOTATED_CDS"/>
    <property type="molecule type" value="Genomic_DNA"/>
</dbReference>
<dbReference type="EMBL" id="AL035693">
    <property type="status" value="NOT_ANNOTATED_CDS"/>
    <property type="molecule type" value="Genomic_DNA"/>
</dbReference>
<dbReference type="EMBL" id="AL137179">
    <property type="status" value="NOT_ANNOTATED_CDS"/>
    <property type="molecule type" value="Genomic_DNA"/>
</dbReference>
<dbReference type="EMBL" id="AL158139">
    <property type="status" value="NOT_ANNOTATED_CDS"/>
    <property type="molecule type" value="Genomic_DNA"/>
</dbReference>
<dbReference type="EMBL" id="AL354670">
    <property type="status" value="NOT_ANNOTATED_CDS"/>
    <property type="molecule type" value="Genomic_DNA"/>
</dbReference>
<dbReference type="EMBL" id="AL451141">
    <property type="status" value="NOT_ANNOTATED_CDS"/>
    <property type="molecule type" value="Genomic_DNA"/>
</dbReference>
<dbReference type="EMBL" id="AL591048">
    <property type="status" value="NOT_ANNOTATED_CDS"/>
    <property type="molecule type" value="Genomic_DNA"/>
</dbReference>
<dbReference type="EMBL" id="BC000117">
    <property type="protein sequence ID" value="AAH00117.1"/>
    <property type="molecule type" value="mRNA"/>
</dbReference>
<dbReference type="CCDS" id="CCDS4474.1">
    <molecule id="O60547-1"/>
</dbReference>
<dbReference type="CCDS" id="CCDS58994.1">
    <molecule id="O60547-2"/>
</dbReference>
<dbReference type="RefSeq" id="NP_001240775.1">
    <molecule id="O60547-2"/>
    <property type="nucleotide sequence ID" value="NM_001253846.2"/>
</dbReference>
<dbReference type="RefSeq" id="NP_001491.1">
    <molecule id="O60547-1"/>
    <property type="nucleotide sequence ID" value="NM_001500.4"/>
</dbReference>
<dbReference type="PDB" id="1T2A">
    <property type="method" value="X-ray"/>
    <property type="resolution" value="1.84 A"/>
    <property type="chains" value="A/B/C/D=23-372"/>
</dbReference>
<dbReference type="PDB" id="5IN4">
    <property type="method" value="X-ray"/>
    <property type="resolution" value="1.60 A"/>
    <property type="chains" value="A/B/C/D=23-372"/>
</dbReference>
<dbReference type="PDB" id="5IN5">
    <property type="method" value="X-ray"/>
    <property type="resolution" value="1.90 A"/>
    <property type="chains" value="A/B/C/D=23-372"/>
</dbReference>
<dbReference type="PDB" id="6GPJ">
    <property type="method" value="X-ray"/>
    <property type="resolution" value="1.94 A"/>
    <property type="chains" value="A/B/C/D=23-372"/>
</dbReference>
<dbReference type="PDB" id="6GPK">
    <property type="method" value="X-ray"/>
    <property type="resolution" value="1.47 A"/>
    <property type="chains" value="A/B/C/D=23-372"/>
</dbReference>
<dbReference type="PDB" id="6GPL">
    <property type="method" value="X-ray"/>
    <property type="resolution" value="1.76 A"/>
    <property type="chains" value="B/C/D/E=23-372"/>
</dbReference>
<dbReference type="PDB" id="6Q94">
    <property type="method" value="X-ray"/>
    <property type="resolution" value="2.80 A"/>
    <property type="chains" value="A/B/C/D/E/F/G/H=23-372"/>
</dbReference>
<dbReference type="PDBsum" id="1T2A"/>
<dbReference type="PDBsum" id="5IN4"/>
<dbReference type="PDBsum" id="5IN5"/>
<dbReference type="PDBsum" id="6GPJ"/>
<dbReference type="PDBsum" id="6GPK"/>
<dbReference type="PDBsum" id="6GPL"/>
<dbReference type="PDBsum" id="6Q94"/>
<dbReference type="SMR" id="O60547"/>
<dbReference type="BioGRID" id="109024">
    <property type="interactions" value="74"/>
</dbReference>
<dbReference type="FunCoup" id="O60547">
    <property type="interactions" value="873"/>
</dbReference>
<dbReference type="IntAct" id="O60547">
    <property type="interactions" value="24"/>
</dbReference>
<dbReference type="STRING" id="9606.ENSP00000370194"/>
<dbReference type="ChEMBL" id="CHEMBL4105807"/>
<dbReference type="DrugBank" id="DB04315">
    <property type="generic name" value="Guanosine-5'-Diphosphate"/>
</dbReference>
<dbReference type="DrugBank" id="DB02547">
    <property type="generic name" value="Guanosine-5'-Diphosphate-Rhamnose"/>
</dbReference>
<dbReference type="GlyGen" id="O60547">
    <property type="glycosylation" value="1 site, 1 O-linked glycan (1 site)"/>
</dbReference>
<dbReference type="iPTMnet" id="O60547"/>
<dbReference type="MetOSite" id="O60547"/>
<dbReference type="PhosphoSitePlus" id="O60547"/>
<dbReference type="BioMuta" id="GMDS"/>
<dbReference type="jPOST" id="O60547"/>
<dbReference type="MassIVE" id="O60547"/>
<dbReference type="PaxDb" id="9606-ENSP00000370194"/>
<dbReference type="PeptideAtlas" id="O60547"/>
<dbReference type="ProteomicsDB" id="20728"/>
<dbReference type="ProteomicsDB" id="49465">
    <molecule id="O60547-1"/>
</dbReference>
<dbReference type="Pumba" id="O60547"/>
<dbReference type="Antibodypedia" id="24246">
    <property type="antibodies" value="217 antibodies from 29 providers"/>
</dbReference>
<dbReference type="DNASU" id="2762"/>
<dbReference type="Ensembl" id="ENST00000380815.5">
    <molecule id="O60547-1"/>
    <property type="protein sequence ID" value="ENSP00000370194.4"/>
    <property type="gene ID" value="ENSG00000112699.11"/>
</dbReference>
<dbReference type="Ensembl" id="ENST00000530927.5">
    <molecule id="O60547-2"/>
    <property type="protein sequence ID" value="ENSP00000436726.1"/>
    <property type="gene ID" value="ENSG00000112699.11"/>
</dbReference>
<dbReference type="GeneID" id="2762"/>
<dbReference type="KEGG" id="hsa:2762"/>
<dbReference type="MANE-Select" id="ENST00000380815.5">
    <property type="protein sequence ID" value="ENSP00000370194.4"/>
    <property type="RefSeq nucleotide sequence ID" value="NM_001500.4"/>
    <property type="RefSeq protein sequence ID" value="NP_001491.1"/>
</dbReference>
<dbReference type="UCSC" id="uc003mtq.4">
    <molecule id="O60547-1"/>
    <property type="organism name" value="human"/>
</dbReference>
<dbReference type="AGR" id="HGNC:4369"/>
<dbReference type="CTD" id="2762"/>
<dbReference type="DisGeNET" id="2762"/>
<dbReference type="GeneCards" id="GMDS"/>
<dbReference type="HGNC" id="HGNC:4369">
    <property type="gene designation" value="GMDS"/>
</dbReference>
<dbReference type="HPA" id="ENSG00000112699">
    <property type="expression patterns" value="Tissue enhanced (intestine, salivary gland, stomach)"/>
</dbReference>
<dbReference type="MIM" id="602884">
    <property type="type" value="gene"/>
</dbReference>
<dbReference type="neXtProt" id="NX_O60547"/>
<dbReference type="OpenTargets" id="ENSG00000112699"/>
<dbReference type="PharmGKB" id="PA28754"/>
<dbReference type="VEuPathDB" id="HostDB:ENSG00000112699"/>
<dbReference type="eggNOG" id="KOG1372">
    <property type="taxonomic scope" value="Eukaryota"/>
</dbReference>
<dbReference type="GeneTree" id="ENSGT00440000033640"/>
<dbReference type="HOGENOM" id="CLU_007383_14_0_1"/>
<dbReference type="InParanoid" id="O60547"/>
<dbReference type="OMA" id="HWQTVNY"/>
<dbReference type="OrthoDB" id="10253554at2759"/>
<dbReference type="PAN-GO" id="O60547">
    <property type="GO annotations" value="3 GO annotations based on evolutionary models"/>
</dbReference>
<dbReference type="PhylomeDB" id="O60547"/>
<dbReference type="TreeFam" id="TF300682"/>
<dbReference type="BRENDA" id="4.2.1.47">
    <property type="organism ID" value="2681"/>
</dbReference>
<dbReference type="PathwayCommons" id="O60547"/>
<dbReference type="Reactome" id="R-HSA-6787639">
    <property type="pathway name" value="GDP-fucose biosynthesis"/>
</dbReference>
<dbReference type="SignaLink" id="O60547"/>
<dbReference type="UniPathway" id="UPA00128">
    <property type="reaction ID" value="UER00190"/>
</dbReference>
<dbReference type="BioGRID-ORCS" id="2762">
    <property type="hits" value="16 hits in 1165 CRISPR screens"/>
</dbReference>
<dbReference type="ChiTaRS" id="GMDS">
    <property type="organism name" value="human"/>
</dbReference>
<dbReference type="EvolutionaryTrace" id="O60547"/>
<dbReference type="GeneWiki" id="GMDS_(gene)"/>
<dbReference type="GenomeRNAi" id="2762"/>
<dbReference type="Pharos" id="O60547">
    <property type="development level" value="Tbio"/>
</dbReference>
<dbReference type="PRO" id="PR:O60547"/>
<dbReference type="Proteomes" id="UP000005640">
    <property type="component" value="Chromosome 6"/>
</dbReference>
<dbReference type="RNAct" id="O60547">
    <property type="molecule type" value="protein"/>
</dbReference>
<dbReference type="Bgee" id="ENSG00000112699">
    <property type="expression patterns" value="Expressed in parotid gland and 184 other cell types or tissues"/>
</dbReference>
<dbReference type="GO" id="GO:0005737">
    <property type="term" value="C:cytoplasm"/>
    <property type="evidence" value="ECO:0000305"/>
    <property type="project" value="UniProtKB"/>
</dbReference>
<dbReference type="GO" id="GO:0005829">
    <property type="term" value="C:cytosol"/>
    <property type="evidence" value="ECO:0000304"/>
    <property type="project" value="Reactome"/>
</dbReference>
<dbReference type="GO" id="GO:0070062">
    <property type="term" value="C:extracellular exosome"/>
    <property type="evidence" value="ECO:0007005"/>
    <property type="project" value="UniProtKB"/>
</dbReference>
<dbReference type="GO" id="GO:0008446">
    <property type="term" value="F:GDP-mannose 4,6-dehydratase activity"/>
    <property type="evidence" value="ECO:0000314"/>
    <property type="project" value="UniProtKB"/>
</dbReference>
<dbReference type="GO" id="GO:0042802">
    <property type="term" value="F:identical protein binding"/>
    <property type="evidence" value="ECO:0000353"/>
    <property type="project" value="IntAct"/>
</dbReference>
<dbReference type="GO" id="GO:0070401">
    <property type="term" value="F:NADP+ binding"/>
    <property type="evidence" value="ECO:0000314"/>
    <property type="project" value="UniProtKB"/>
</dbReference>
<dbReference type="GO" id="GO:0042351">
    <property type="term" value="P:'de novo' GDP-L-fucose biosynthetic process"/>
    <property type="evidence" value="ECO:0000314"/>
    <property type="project" value="UniProtKB"/>
</dbReference>
<dbReference type="GO" id="GO:0042350">
    <property type="term" value="P:GDP-L-fucose biosynthetic process"/>
    <property type="evidence" value="ECO:0000304"/>
    <property type="project" value="Reactome"/>
</dbReference>
<dbReference type="GO" id="GO:0019673">
    <property type="term" value="P:GDP-mannose metabolic process"/>
    <property type="evidence" value="ECO:0000314"/>
    <property type="project" value="UniProtKB"/>
</dbReference>
<dbReference type="GO" id="GO:0007219">
    <property type="term" value="P:Notch signaling pathway"/>
    <property type="evidence" value="ECO:0000250"/>
    <property type="project" value="UniProtKB"/>
</dbReference>
<dbReference type="CDD" id="cd05260">
    <property type="entry name" value="GDP_MD_SDR_e"/>
    <property type="match status" value="1"/>
</dbReference>
<dbReference type="FunFam" id="3.40.50.720:FF:001053">
    <property type="entry name" value="GDP-mannose 4,6 dehydratase"/>
    <property type="match status" value="1"/>
</dbReference>
<dbReference type="Gene3D" id="3.40.50.720">
    <property type="entry name" value="NAD(P)-binding Rossmann-like Domain"/>
    <property type="match status" value="1"/>
</dbReference>
<dbReference type="Gene3D" id="3.90.25.10">
    <property type="entry name" value="UDP-galactose 4-epimerase, domain 1"/>
    <property type="match status" value="1"/>
</dbReference>
<dbReference type="HAMAP" id="MF_00955">
    <property type="entry name" value="GDP_Man_dehydratase"/>
    <property type="match status" value="1"/>
</dbReference>
<dbReference type="InterPro" id="IPR006368">
    <property type="entry name" value="GDP_Man_deHydtase"/>
</dbReference>
<dbReference type="InterPro" id="IPR016040">
    <property type="entry name" value="NAD(P)-bd_dom"/>
</dbReference>
<dbReference type="InterPro" id="IPR036291">
    <property type="entry name" value="NAD(P)-bd_dom_sf"/>
</dbReference>
<dbReference type="NCBIfam" id="TIGR01472">
    <property type="entry name" value="gmd"/>
    <property type="match status" value="1"/>
</dbReference>
<dbReference type="PANTHER" id="PTHR43715:SF1">
    <property type="entry name" value="GDP-MANNOSE 4,6 DEHYDRATASE"/>
    <property type="match status" value="1"/>
</dbReference>
<dbReference type="PANTHER" id="PTHR43715">
    <property type="entry name" value="GDP-MANNOSE 4,6-DEHYDRATASE"/>
    <property type="match status" value="1"/>
</dbReference>
<dbReference type="Pfam" id="PF16363">
    <property type="entry name" value="GDP_Man_Dehyd"/>
    <property type="match status" value="1"/>
</dbReference>
<dbReference type="SUPFAM" id="SSF51735">
    <property type="entry name" value="NAD(P)-binding Rossmann-fold domains"/>
    <property type="match status" value="1"/>
</dbReference>
<reference key="1">
    <citation type="journal article" date="1998" name="J. Biol. Chem.">
        <title>Molecular cloning of human GDP-mannose 4,6-dehydratase and reconstitution of GDP-fucose biosynthesis in vitro.</title>
        <authorList>
            <person name="Sullivan F.X."/>
            <person name="Kumar R."/>
            <person name="Kriz R."/>
            <person name="Stahl M."/>
            <person name="Xu G.-Y."/>
            <person name="Rouse J."/>
            <person name="Chang X.J."/>
            <person name="Boodhoo A."/>
            <person name="Potvin B."/>
            <person name="Cumming D.A."/>
        </authorList>
    </citation>
    <scope>NUCLEOTIDE SEQUENCE [MRNA] (ISOFORM 1)</scope>
    <scope>FUNCTION</scope>
    <scope>CATALYTIC ACTIVITY</scope>
    <scope>COFACTOR</scope>
    <scope>ACTIVITY REGULATION</scope>
    <scope>TISSUE SPECIFICITY</scope>
</reference>
<reference key="2">
    <citation type="journal article" date="1998" name="J. Biol. Chem.">
        <title>Molecular cloning and expression of GDP-D-mannose-4,6-dehydratase, a key enzyme for fucose metabolism defective in Lec13 cells.</title>
        <authorList>
            <person name="Ohyama C."/>
            <person name="Smith P.L."/>
            <person name="Angata K."/>
            <person name="Fukuda M.N."/>
            <person name="Lowe J.B."/>
            <person name="Fukuda M."/>
        </authorList>
    </citation>
    <scope>NUCLEOTIDE SEQUENCE [MRNA] (ISOFORM 2)</scope>
    <scope>FUNCTION</scope>
    <source>
        <tissue>Brain</tissue>
    </source>
</reference>
<reference key="3">
    <citation type="submission" date="2004-06" db="EMBL/GenBank/DDBJ databases">
        <title>Cloning of human full open reading frames in Gateway(TM) system entry vector (pDONR201).</title>
        <authorList>
            <person name="Halleck A."/>
            <person name="Ebert L."/>
            <person name="Mkoundinya M."/>
            <person name="Schick M."/>
            <person name="Eisenstein S."/>
            <person name="Neubert P."/>
            <person name="Kstrang K."/>
            <person name="Schatten R."/>
            <person name="Shen B."/>
            <person name="Henze S."/>
            <person name="Mar W."/>
            <person name="Korn B."/>
            <person name="Zuo D."/>
            <person name="Hu Y."/>
            <person name="LaBaer J."/>
        </authorList>
    </citation>
    <scope>NUCLEOTIDE SEQUENCE [LARGE SCALE MRNA] (ISOFORM 1)</scope>
</reference>
<reference key="4">
    <citation type="journal article" date="2003" name="Nature">
        <title>The DNA sequence and analysis of human chromosome 6.</title>
        <authorList>
            <person name="Mungall A.J."/>
            <person name="Palmer S.A."/>
            <person name="Sims S.K."/>
            <person name="Edwards C.A."/>
            <person name="Ashurst J.L."/>
            <person name="Wilming L."/>
            <person name="Jones M.C."/>
            <person name="Horton R."/>
            <person name="Hunt S.E."/>
            <person name="Scott C.E."/>
            <person name="Gilbert J.G.R."/>
            <person name="Clamp M.E."/>
            <person name="Bethel G."/>
            <person name="Milne S."/>
            <person name="Ainscough R."/>
            <person name="Almeida J.P."/>
            <person name="Ambrose K.D."/>
            <person name="Andrews T.D."/>
            <person name="Ashwell R.I.S."/>
            <person name="Babbage A.K."/>
            <person name="Bagguley C.L."/>
            <person name="Bailey J."/>
            <person name="Banerjee R."/>
            <person name="Barker D.J."/>
            <person name="Barlow K.F."/>
            <person name="Bates K."/>
            <person name="Beare D.M."/>
            <person name="Beasley H."/>
            <person name="Beasley O."/>
            <person name="Bird C.P."/>
            <person name="Blakey S.E."/>
            <person name="Bray-Allen S."/>
            <person name="Brook J."/>
            <person name="Brown A.J."/>
            <person name="Brown J.Y."/>
            <person name="Burford D.C."/>
            <person name="Burrill W."/>
            <person name="Burton J."/>
            <person name="Carder C."/>
            <person name="Carter N.P."/>
            <person name="Chapman J.C."/>
            <person name="Clark S.Y."/>
            <person name="Clark G."/>
            <person name="Clee C.M."/>
            <person name="Clegg S."/>
            <person name="Cobley V."/>
            <person name="Collier R.E."/>
            <person name="Collins J.E."/>
            <person name="Colman L.K."/>
            <person name="Corby N.R."/>
            <person name="Coville G.J."/>
            <person name="Culley K.M."/>
            <person name="Dhami P."/>
            <person name="Davies J."/>
            <person name="Dunn M."/>
            <person name="Earthrowl M.E."/>
            <person name="Ellington A.E."/>
            <person name="Evans K.A."/>
            <person name="Faulkner L."/>
            <person name="Francis M.D."/>
            <person name="Frankish A."/>
            <person name="Frankland J."/>
            <person name="French L."/>
            <person name="Garner P."/>
            <person name="Garnett J."/>
            <person name="Ghori M.J."/>
            <person name="Gilby L.M."/>
            <person name="Gillson C.J."/>
            <person name="Glithero R.J."/>
            <person name="Grafham D.V."/>
            <person name="Grant M."/>
            <person name="Gribble S."/>
            <person name="Griffiths C."/>
            <person name="Griffiths M.N.D."/>
            <person name="Hall R."/>
            <person name="Halls K.S."/>
            <person name="Hammond S."/>
            <person name="Harley J.L."/>
            <person name="Hart E.A."/>
            <person name="Heath P.D."/>
            <person name="Heathcott R."/>
            <person name="Holmes S.J."/>
            <person name="Howden P.J."/>
            <person name="Howe K.L."/>
            <person name="Howell G.R."/>
            <person name="Huckle E."/>
            <person name="Humphray S.J."/>
            <person name="Humphries M.D."/>
            <person name="Hunt A.R."/>
            <person name="Johnson C.M."/>
            <person name="Joy A.A."/>
            <person name="Kay M."/>
            <person name="Keenan S.J."/>
            <person name="Kimberley A.M."/>
            <person name="King A."/>
            <person name="Laird G.K."/>
            <person name="Langford C."/>
            <person name="Lawlor S."/>
            <person name="Leongamornlert D.A."/>
            <person name="Leversha M."/>
            <person name="Lloyd C.R."/>
            <person name="Lloyd D.M."/>
            <person name="Loveland J.E."/>
            <person name="Lovell J."/>
            <person name="Martin S."/>
            <person name="Mashreghi-Mohammadi M."/>
            <person name="Maslen G.L."/>
            <person name="Matthews L."/>
            <person name="McCann O.T."/>
            <person name="McLaren S.J."/>
            <person name="McLay K."/>
            <person name="McMurray A."/>
            <person name="Moore M.J.F."/>
            <person name="Mullikin J.C."/>
            <person name="Niblett D."/>
            <person name="Nickerson T."/>
            <person name="Novik K.L."/>
            <person name="Oliver K."/>
            <person name="Overton-Larty E.K."/>
            <person name="Parker A."/>
            <person name="Patel R."/>
            <person name="Pearce A.V."/>
            <person name="Peck A.I."/>
            <person name="Phillimore B.J.C.T."/>
            <person name="Phillips S."/>
            <person name="Plumb R.W."/>
            <person name="Porter K.M."/>
            <person name="Ramsey Y."/>
            <person name="Ranby S.A."/>
            <person name="Rice C.M."/>
            <person name="Ross M.T."/>
            <person name="Searle S.M."/>
            <person name="Sehra H.K."/>
            <person name="Sheridan E."/>
            <person name="Skuce C.D."/>
            <person name="Smith S."/>
            <person name="Smith M."/>
            <person name="Spraggon L."/>
            <person name="Squares S.L."/>
            <person name="Steward C.A."/>
            <person name="Sycamore N."/>
            <person name="Tamlyn-Hall G."/>
            <person name="Tester J."/>
            <person name="Theaker A.J."/>
            <person name="Thomas D.W."/>
            <person name="Thorpe A."/>
            <person name="Tracey A."/>
            <person name="Tromans A."/>
            <person name="Tubby B."/>
            <person name="Wall M."/>
            <person name="Wallis J.M."/>
            <person name="West A.P."/>
            <person name="White S.S."/>
            <person name="Whitehead S.L."/>
            <person name="Whittaker H."/>
            <person name="Wild A."/>
            <person name="Willey D.J."/>
            <person name="Wilmer T.E."/>
            <person name="Wood J.M."/>
            <person name="Wray P.W."/>
            <person name="Wyatt J.C."/>
            <person name="Young L."/>
            <person name="Younger R.M."/>
            <person name="Bentley D.R."/>
            <person name="Coulson A."/>
            <person name="Durbin R.M."/>
            <person name="Hubbard T."/>
            <person name="Sulston J.E."/>
            <person name="Dunham I."/>
            <person name="Rogers J."/>
            <person name="Beck S."/>
        </authorList>
    </citation>
    <scope>NUCLEOTIDE SEQUENCE [LARGE SCALE GENOMIC DNA]</scope>
</reference>
<reference key="5">
    <citation type="journal article" date="2004" name="Genome Res.">
        <title>The status, quality, and expansion of the NIH full-length cDNA project: the Mammalian Gene Collection (MGC).</title>
        <authorList>
            <consortium name="The MGC Project Team"/>
        </authorList>
    </citation>
    <scope>NUCLEOTIDE SEQUENCE [LARGE SCALE MRNA] (ISOFORM 1)</scope>
    <source>
        <tissue>Eye</tissue>
    </source>
</reference>
<reference key="6">
    <citation type="journal article" date="2009" name="Anal. Chem.">
        <title>Lys-N and trypsin cover complementary parts of the phosphoproteome in a refined SCX-based approach.</title>
        <authorList>
            <person name="Gauci S."/>
            <person name="Helbig A.O."/>
            <person name="Slijper M."/>
            <person name="Krijgsveld J."/>
            <person name="Heck A.J."/>
            <person name="Mohammed S."/>
        </authorList>
    </citation>
    <scope>ACETYLATION [LARGE SCALE ANALYSIS] AT ALA-2</scope>
    <scope>CLEAVAGE OF INITIATOR METHIONINE [LARGE SCALE ANALYSIS]</scope>
    <scope>IDENTIFICATION BY MASS SPECTROMETRY [LARGE SCALE ANALYSIS]</scope>
</reference>
<reference key="7">
    <citation type="journal article" date="2011" name="BMC Syst. Biol.">
        <title>Initial characterization of the human central proteome.</title>
        <authorList>
            <person name="Burkard T.R."/>
            <person name="Planyavsky M."/>
            <person name="Kaupe I."/>
            <person name="Breitwieser F.P."/>
            <person name="Buerckstuemmer T."/>
            <person name="Bennett K.L."/>
            <person name="Superti-Furga G."/>
            <person name="Colinge J."/>
        </authorList>
    </citation>
    <scope>IDENTIFICATION BY MASS SPECTROMETRY [LARGE SCALE ANALYSIS]</scope>
</reference>
<reference key="8">
    <citation type="journal article" date="2013" name="J. Proteome Res.">
        <title>Toward a comprehensive characterization of a human cancer cell phosphoproteome.</title>
        <authorList>
            <person name="Zhou H."/>
            <person name="Di Palma S."/>
            <person name="Preisinger C."/>
            <person name="Peng M."/>
            <person name="Polat A.N."/>
            <person name="Heck A.J."/>
            <person name="Mohammed S."/>
        </authorList>
    </citation>
    <scope>PHOSPHORYLATION [LARGE SCALE ANALYSIS] AT TYR-323</scope>
    <scope>IDENTIFICATION BY MASS SPECTROMETRY [LARGE SCALE ANALYSIS]</scope>
    <source>
        <tissue>Erythroleukemia</tissue>
    </source>
</reference>
<reference key="9">
    <citation type="submission" date="2004-04" db="PDB data bank">
        <title>Crystal structure and biophysical characterization of human GDP-D-mannose 4,6-dehydratase.</title>
        <authorList>
            <person name="Vedadi M."/>
            <person name="Walker J.R."/>
            <person name="Sharma S."/>
            <person name="Houston S."/>
            <person name="Wasney G."/>
            <person name="Loppnau P."/>
            <person name="Oppermann U."/>
        </authorList>
    </citation>
    <scope>X-RAY CRYSTALLOGRAPHY (1.84 ANGSTROMS) OF 23-372 IN COMPLEX WITH NADP</scope>
    <scope>COFACTOR</scope>
</reference>